<sequence>MLNVAIVGASGYTGLELLRILYAHPQVAVTCVTSERSAGKRIDEVFPTLRDRCSLVLENLEPVRVSQKADLIFTALPHKAAMAVMPTFMELGKTVIDLSADYRLSDAEVYGAWYEPHLNPELLKSAVYGLPEIRRESIRGKKLVANPGCYPTSITLGLAPLLKNGMIDLKSIIADSASGVTGAGRGAKVDSLYCEVNEGYKAYGVGGVHRHTPEIEQELSLLAGEKVTLTFTPHLVPMDRGILSTIYATPLKGVTTEELNELYRNFYAEEPFVRVLPLGSLPSTAFVRGSNFCDIAPVVDKRTGRVIVVSAIDNLMKGASGQAVQNMNIVCGFYESAGLSGLALFP</sequence>
<organism>
    <name type="scientific">Pelobacter propionicus (strain DSM 2379 / NBRC 103807 / OttBd1)</name>
    <dbReference type="NCBI Taxonomy" id="338966"/>
    <lineage>
        <taxon>Bacteria</taxon>
        <taxon>Pseudomonadati</taxon>
        <taxon>Thermodesulfobacteriota</taxon>
        <taxon>Desulfuromonadia</taxon>
        <taxon>Desulfuromonadales</taxon>
        <taxon>Desulfuromonadaceae</taxon>
        <taxon>Pelobacter</taxon>
    </lineage>
</organism>
<evidence type="ECO:0000255" key="1">
    <source>
        <dbReference type="HAMAP-Rule" id="MF_00150"/>
    </source>
</evidence>
<dbReference type="EC" id="1.2.1.38" evidence="1"/>
<dbReference type="EMBL" id="CP000482">
    <property type="protein sequence ID" value="ABL00676.1"/>
    <property type="molecule type" value="Genomic_DNA"/>
</dbReference>
<dbReference type="RefSeq" id="WP_011736911.1">
    <property type="nucleotide sequence ID" value="NC_008609.1"/>
</dbReference>
<dbReference type="SMR" id="A1ATK5"/>
<dbReference type="STRING" id="338966.Ppro_3080"/>
<dbReference type="KEGG" id="ppd:Ppro_3080"/>
<dbReference type="eggNOG" id="COG0002">
    <property type="taxonomic scope" value="Bacteria"/>
</dbReference>
<dbReference type="HOGENOM" id="CLU_006384_0_1_7"/>
<dbReference type="OrthoDB" id="9801289at2"/>
<dbReference type="UniPathway" id="UPA00068">
    <property type="reaction ID" value="UER00108"/>
</dbReference>
<dbReference type="Proteomes" id="UP000006732">
    <property type="component" value="Chromosome"/>
</dbReference>
<dbReference type="GO" id="GO:0005737">
    <property type="term" value="C:cytoplasm"/>
    <property type="evidence" value="ECO:0007669"/>
    <property type="project" value="UniProtKB-SubCell"/>
</dbReference>
<dbReference type="GO" id="GO:0003942">
    <property type="term" value="F:N-acetyl-gamma-glutamyl-phosphate reductase activity"/>
    <property type="evidence" value="ECO:0007669"/>
    <property type="project" value="UniProtKB-UniRule"/>
</dbReference>
<dbReference type="GO" id="GO:0051287">
    <property type="term" value="F:NAD binding"/>
    <property type="evidence" value="ECO:0007669"/>
    <property type="project" value="InterPro"/>
</dbReference>
<dbReference type="GO" id="GO:0070401">
    <property type="term" value="F:NADP+ binding"/>
    <property type="evidence" value="ECO:0007669"/>
    <property type="project" value="InterPro"/>
</dbReference>
<dbReference type="GO" id="GO:0006526">
    <property type="term" value="P:L-arginine biosynthetic process"/>
    <property type="evidence" value="ECO:0007669"/>
    <property type="project" value="UniProtKB-UniRule"/>
</dbReference>
<dbReference type="CDD" id="cd23934">
    <property type="entry name" value="AGPR_1_C"/>
    <property type="match status" value="1"/>
</dbReference>
<dbReference type="CDD" id="cd17895">
    <property type="entry name" value="AGPR_1_N"/>
    <property type="match status" value="1"/>
</dbReference>
<dbReference type="FunFam" id="3.30.360.10:FF:000014">
    <property type="entry name" value="N-acetyl-gamma-glutamyl-phosphate reductase"/>
    <property type="match status" value="1"/>
</dbReference>
<dbReference type="Gene3D" id="3.30.360.10">
    <property type="entry name" value="Dihydrodipicolinate Reductase, domain 2"/>
    <property type="match status" value="1"/>
</dbReference>
<dbReference type="Gene3D" id="3.40.50.720">
    <property type="entry name" value="NAD(P)-binding Rossmann-like Domain"/>
    <property type="match status" value="1"/>
</dbReference>
<dbReference type="HAMAP" id="MF_00150">
    <property type="entry name" value="ArgC_type1"/>
    <property type="match status" value="1"/>
</dbReference>
<dbReference type="InterPro" id="IPR023013">
    <property type="entry name" value="AGPR_AS"/>
</dbReference>
<dbReference type="InterPro" id="IPR000706">
    <property type="entry name" value="AGPR_type-1"/>
</dbReference>
<dbReference type="InterPro" id="IPR036291">
    <property type="entry name" value="NAD(P)-bd_dom_sf"/>
</dbReference>
<dbReference type="InterPro" id="IPR050085">
    <property type="entry name" value="NAGSA_dehydrogenase"/>
</dbReference>
<dbReference type="InterPro" id="IPR000534">
    <property type="entry name" value="Semialdehyde_DH_NAD-bd"/>
</dbReference>
<dbReference type="NCBIfam" id="TIGR01850">
    <property type="entry name" value="argC"/>
    <property type="match status" value="1"/>
</dbReference>
<dbReference type="PANTHER" id="PTHR32338:SF10">
    <property type="entry name" value="N-ACETYL-GAMMA-GLUTAMYL-PHOSPHATE REDUCTASE, CHLOROPLASTIC-RELATED"/>
    <property type="match status" value="1"/>
</dbReference>
<dbReference type="PANTHER" id="PTHR32338">
    <property type="entry name" value="N-ACETYL-GAMMA-GLUTAMYL-PHOSPHATE REDUCTASE, CHLOROPLASTIC-RELATED-RELATED"/>
    <property type="match status" value="1"/>
</dbReference>
<dbReference type="Pfam" id="PF01118">
    <property type="entry name" value="Semialdhyde_dh"/>
    <property type="match status" value="1"/>
</dbReference>
<dbReference type="Pfam" id="PF22698">
    <property type="entry name" value="Semialdhyde_dhC_1"/>
    <property type="match status" value="1"/>
</dbReference>
<dbReference type="SMART" id="SM00859">
    <property type="entry name" value="Semialdhyde_dh"/>
    <property type="match status" value="1"/>
</dbReference>
<dbReference type="SUPFAM" id="SSF55347">
    <property type="entry name" value="Glyceraldehyde-3-phosphate dehydrogenase-like, C-terminal domain"/>
    <property type="match status" value="1"/>
</dbReference>
<dbReference type="SUPFAM" id="SSF51735">
    <property type="entry name" value="NAD(P)-binding Rossmann-fold domains"/>
    <property type="match status" value="1"/>
</dbReference>
<dbReference type="PROSITE" id="PS01224">
    <property type="entry name" value="ARGC"/>
    <property type="match status" value="1"/>
</dbReference>
<accession>A1ATK5</accession>
<gene>
    <name evidence="1" type="primary">argC</name>
    <name type="ordered locus">Ppro_3080</name>
</gene>
<proteinExistence type="inferred from homology"/>
<comment type="function">
    <text evidence="1">Catalyzes the NADPH-dependent reduction of N-acetyl-5-glutamyl phosphate to yield N-acetyl-L-glutamate 5-semialdehyde.</text>
</comment>
<comment type="catalytic activity">
    <reaction evidence="1">
        <text>N-acetyl-L-glutamate 5-semialdehyde + phosphate + NADP(+) = N-acetyl-L-glutamyl 5-phosphate + NADPH + H(+)</text>
        <dbReference type="Rhea" id="RHEA:21588"/>
        <dbReference type="ChEBI" id="CHEBI:15378"/>
        <dbReference type="ChEBI" id="CHEBI:29123"/>
        <dbReference type="ChEBI" id="CHEBI:43474"/>
        <dbReference type="ChEBI" id="CHEBI:57783"/>
        <dbReference type="ChEBI" id="CHEBI:57936"/>
        <dbReference type="ChEBI" id="CHEBI:58349"/>
        <dbReference type="EC" id="1.2.1.38"/>
    </reaction>
</comment>
<comment type="pathway">
    <text evidence="1">Amino-acid biosynthesis; L-arginine biosynthesis; N(2)-acetyl-L-ornithine from L-glutamate: step 3/4.</text>
</comment>
<comment type="subcellular location">
    <subcellularLocation>
        <location evidence="1">Cytoplasm</location>
    </subcellularLocation>
</comment>
<comment type="similarity">
    <text evidence="1">Belongs to the NAGSA dehydrogenase family. Type 1 subfamily.</text>
</comment>
<name>ARGC_PELPD</name>
<reference key="1">
    <citation type="submission" date="2006-10" db="EMBL/GenBank/DDBJ databases">
        <title>Complete sequence of chromosome of Pelobacter propionicus DSM 2379.</title>
        <authorList>
            <consortium name="US DOE Joint Genome Institute"/>
            <person name="Copeland A."/>
            <person name="Lucas S."/>
            <person name="Lapidus A."/>
            <person name="Barry K."/>
            <person name="Detter J.C."/>
            <person name="Glavina del Rio T."/>
            <person name="Hammon N."/>
            <person name="Israni S."/>
            <person name="Dalin E."/>
            <person name="Tice H."/>
            <person name="Pitluck S."/>
            <person name="Saunders E."/>
            <person name="Brettin T."/>
            <person name="Bruce D."/>
            <person name="Han C."/>
            <person name="Tapia R."/>
            <person name="Schmutz J."/>
            <person name="Larimer F."/>
            <person name="Land M."/>
            <person name="Hauser L."/>
            <person name="Kyrpides N."/>
            <person name="Kim E."/>
            <person name="Lovley D."/>
            <person name="Richardson P."/>
        </authorList>
    </citation>
    <scope>NUCLEOTIDE SEQUENCE [LARGE SCALE GENOMIC DNA]</scope>
    <source>
        <strain>DSM 2379 / NBRC 103807 / OttBd1</strain>
    </source>
</reference>
<feature type="chain" id="PRO_1000011030" description="N-acetyl-gamma-glutamyl-phosphate reductase">
    <location>
        <begin position="1"/>
        <end position="346"/>
    </location>
</feature>
<feature type="active site" evidence="1">
    <location>
        <position position="149"/>
    </location>
</feature>
<keyword id="KW-0028">Amino-acid biosynthesis</keyword>
<keyword id="KW-0055">Arginine biosynthesis</keyword>
<keyword id="KW-0963">Cytoplasm</keyword>
<keyword id="KW-0521">NADP</keyword>
<keyword id="KW-0560">Oxidoreductase</keyword>
<keyword id="KW-1185">Reference proteome</keyword>
<protein>
    <recommendedName>
        <fullName evidence="1">N-acetyl-gamma-glutamyl-phosphate reductase</fullName>
        <shortName evidence="1">AGPR</shortName>
        <ecNumber evidence="1">1.2.1.38</ecNumber>
    </recommendedName>
    <alternativeName>
        <fullName evidence="1">N-acetyl-glutamate semialdehyde dehydrogenase</fullName>
        <shortName evidence="1">NAGSA dehydrogenase</shortName>
    </alternativeName>
</protein>